<organism>
    <name type="scientific">Xenopus tropicalis</name>
    <name type="common">Western clawed frog</name>
    <name type="synonym">Silurana tropicalis</name>
    <dbReference type="NCBI Taxonomy" id="8364"/>
    <lineage>
        <taxon>Eukaryota</taxon>
        <taxon>Metazoa</taxon>
        <taxon>Chordata</taxon>
        <taxon>Craniata</taxon>
        <taxon>Vertebrata</taxon>
        <taxon>Euteleostomi</taxon>
        <taxon>Amphibia</taxon>
        <taxon>Batrachia</taxon>
        <taxon>Anura</taxon>
        <taxon>Pipoidea</taxon>
        <taxon>Pipidae</taxon>
        <taxon>Xenopodinae</taxon>
        <taxon>Xenopus</taxon>
        <taxon>Silurana</taxon>
    </lineage>
</organism>
<protein>
    <recommendedName>
        <fullName>CXADR-like membrane protein</fullName>
    </recommendedName>
    <alternativeName>
        <fullName>Adipocyte adhesion molecule</fullName>
    </alternativeName>
    <alternativeName>
        <fullName>Coxsackie- and adenovirus receptor-like membrane protein</fullName>
        <shortName>CAR-like membrane protein</shortName>
    </alternativeName>
</protein>
<keyword id="KW-0965">Cell junction</keyword>
<keyword id="KW-1003">Cell membrane</keyword>
<keyword id="KW-1015">Disulfide bond</keyword>
<keyword id="KW-0325">Glycoprotein</keyword>
<keyword id="KW-0393">Immunoglobulin domain</keyword>
<keyword id="KW-0472">Membrane</keyword>
<keyword id="KW-1185">Reference proteome</keyword>
<keyword id="KW-0677">Repeat</keyword>
<keyword id="KW-0732">Signal</keyword>
<keyword id="KW-0796">Tight junction</keyword>
<keyword id="KW-0812">Transmembrane</keyword>
<keyword id="KW-1133">Transmembrane helix</keyword>
<gene>
    <name type="primary">clmp</name>
    <name type="synonym">acam</name>
    <name type="synonym">asam</name>
</gene>
<reference key="1">
    <citation type="submission" date="2004-09" db="EMBL/GenBank/DDBJ databases">
        <authorList>
            <consortium name="NIH - Xenopus Gene Collection (XGC) project"/>
        </authorList>
    </citation>
    <scope>NUCLEOTIDE SEQUENCE [LARGE SCALE MRNA]</scope>
</reference>
<comment type="subcellular location">
    <subcellularLocation>
        <location>Cell junction</location>
        <location>Tight junction</location>
    </subcellularLocation>
    <subcellularLocation>
        <location evidence="4">Cell membrane</location>
        <topology evidence="4">Single-pass type I membrane protein</topology>
    </subcellularLocation>
</comment>
<accession>Q640U3</accession>
<name>CLMP_XENTR</name>
<sequence length="332" mass="36852">MHTLIRSFLGLWYVLGALAQTEIKLVADENVTLPCRHSLGHLGIQSLDIEWLSNISDHGKQVLLSYSGGQVYNAENHKGRYSFVSKYLEGDASLFIRSLQPSDAGQYICKVKNAGQYQWSFITVIVLVKPSELACSSEGAQLEGKNVTLNCKSTAGTKPLNYRWVRVNLKDNVERPVQSTARIGPENQLLLHNLSKTDNGSYRCEVSNEVGKRTCDVDVTVQSVSNTGILAGVACGVVVGVFLIFFTVWLLFHKKEFKKREEEEFFNEIREDAEAPKARLVKPGSSSSDSRSSQSGSSSTRSTTNSASRSQRTHSTQETPHGEQRHHCLEKI</sequence>
<feature type="signal peptide" evidence="1">
    <location>
        <begin position="1"/>
        <end position="19"/>
    </location>
</feature>
<feature type="chain" id="PRO_0000293029" description="CXADR-like membrane protein">
    <location>
        <begin position="20"/>
        <end position="332"/>
    </location>
</feature>
<feature type="topological domain" description="Extracellular" evidence="1">
    <location>
        <begin position="20"/>
        <end position="231"/>
    </location>
</feature>
<feature type="transmembrane region" description="Helical" evidence="1">
    <location>
        <begin position="232"/>
        <end position="252"/>
    </location>
</feature>
<feature type="topological domain" description="Cytoplasmic" evidence="1">
    <location>
        <begin position="253"/>
        <end position="332"/>
    </location>
</feature>
<feature type="domain" description="Ig-like C2-type 1">
    <location>
        <begin position="20"/>
        <end position="123"/>
    </location>
</feature>
<feature type="domain" description="Ig-like C2-type 2">
    <location>
        <begin position="130"/>
        <end position="220"/>
    </location>
</feature>
<feature type="region of interest" description="Disordered" evidence="3">
    <location>
        <begin position="276"/>
        <end position="332"/>
    </location>
</feature>
<feature type="compositionally biased region" description="Low complexity" evidence="3">
    <location>
        <begin position="285"/>
        <end position="310"/>
    </location>
</feature>
<feature type="compositionally biased region" description="Basic and acidic residues" evidence="3">
    <location>
        <begin position="320"/>
        <end position="332"/>
    </location>
</feature>
<feature type="glycosylation site" description="N-linked (GlcNAc...) asparagine" evidence="1">
    <location>
        <position position="193"/>
    </location>
</feature>
<feature type="disulfide bond" evidence="2">
    <location>
        <begin position="35"/>
        <end position="109"/>
    </location>
</feature>
<feature type="disulfide bond" evidence="2">
    <location>
        <begin position="151"/>
        <end position="204"/>
    </location>
</feature>
<evidence type="ECO:0000255" key="1"/>
<evidence type="ECO:0000255" key="2">
    <source>
        <dbReference type="PROSITE-ProRule" id="PRU00114"/>
    </source>
</evidence>
<evidence type="ECO:0000256" key="3">
    <source>
        <dbReference type="SAM" id="MobiDB-lite"/>
    </source>
</evidence>
<evidence type="ECO:0000305" key="4"/>
<dbReference type="EMBL" id="BC082496">
    <property type="protein sequence ID" value="AAH82496.1"/>
    <property type="molecule type" value="mRNA"/>
</dbReference>
<dbReference type="RefSeq" id="NP_001008177.1">
    <property type="nucleotide sequence ID" value="NM_001008176.1"/>
</dbReference>
<dbReference type="RefSeq" id="XP_012821936.1">
    <property type="nucleotide sequence ID" value="XM_012966482.3"/>
</dbReference>
<dbReference type="RefSeq" id="XP_012821937.1">
    <property type="nucleotide sequence ID" value="XM_012966483.3"/>
</dbReference>
<dbReference type="RefSeq" id="XP_012821938.1">
    <property type="nucleotide sequence ID" value="XM_012966484.2"/>
</dbReference>
<dbReference type="SMR" id="Q640U3"/>
<dbReference type="FunCoup" id="Q640U3">
    <property type="interactions" value="28"/>
</dbReference>
<dbReference type="STRING" id="8364.ENSXETP00000047172"/>
<dbReference type="GlyCosmos" id="Q640U3">
    <property type="glycosylation" value="1 site, No reported glycans"/>
</dbReference>
<dbReference type="PaxDb" id="8364-ENSXETP00000002682"/>
<dbReference type="DNASU" id="493539"/>
<dbReference type="GeneID" id="493539"/>
<dbReference type="KEGG" id="xtr:493539"/>
<dbReference type="AGR" id="Xenbase:XB-GENE-973667"/>
<dbReference type="CTD" id="79827"/>
<dbReference type="Xenbase" id="XB-GENE-973667">
    <property type="gene designation" value="clmp"/>
</dbReference>
<dbReference type="eggNOG" id="KOG3866">
    <property type="taxonomic scope" value="Eukaryota"/>
</dbReference>
<dbReference type="InParanoid" id="Q640U3"/>
<dbReference type="OMA" id="RYSCKVK"/>
<dbReference type="OrthoDB" id="9446970at2759"/>
<dbReference type="Proteomes" id="UP000008143">
    <property type="component" value="Chromosome 7"/>
</dbReference>
<dbReference type="Bgee" id="ENSXETG00000001242">
    <property type="expression patterns" value="Expressed in heart and 11 other cell types or tissues"/>
</dbReference>
<dbReference type="ExpressionAtlas" id="Q640U3">
    <property type="expression patterns" value="baseline"/>
</dbReference>
<dbReference type="GO" id="GO:0005923">
    <property type="term" value="C:bicellular tight junction"/>
    <property type="evidence" value="ECO:0007669"/>
    <property type="project" value="UniProtKB-SubCell"/>
</dbReference>
<dbReference type="GO" id="GO:0005881">
    <property type="term" value="C:cytoplasmic microtubule"/>
    <property type="evidence" value="ECO:0000250"/>
    <property type="project" value="UniProtKB"/>
</dbReference>
<dbReference type="GO" id="GO:0005886">
    <property type="term" value="C:plasma membrane"/>
    <property type="evidence" value="ECO:0007669"/>
    <property type="project" value="UniProtKB-SubCell"/>
</dbReference>
<dbReference type="CDD" id="cd20960">
    <property type="entry name" value="IgV_CAR_like"/>
    <property type="match status" value="1"/>
</dbReference>
<dbReference type="Gene3D" id="2.60.40.10">
    <property type="entry name" value="Immunoglobulins"/>
    <property type="match status" value="2"/>
</dbReference>
<dbReference type="InterPro" id="IPR042454">
    <property type="entry name" value="CLMP"/>
</dbReference>
<dbReference type="InterPro" id="IPR007110">
    <property type="entry name" value="Ig-like_dom"/>
</dbReference>
<dbReference type="InterPro" id="IPR036179">
    <property type="entry name" value="Ig-like_dom_sf"/>
</dbReference>
<dbReference type="InterPro" id="IPR013783">
    <property type="entry name" value="Ig-like_fold"/>
</dbReference>
<dbReference type="InterPro" id="IPR003599">
    <property type="entry name" value="Ig_sub"/>
</dbReference>
<dbReference type="InterPro" id="IPR003598">
    <property type="entry name" value="Ig_sub2"/>
</dbReference>
<dbReference type="InterPro" id="IPR013106">
    <property type="entry name" value="Ig_V-set"/>
</dbReference>
<dbReference type="PANTHER" id="PTHR44783">
    <property type="entry name" value="CXADR-LIKE MEMBRANE PROTEIN"/>
    <property type="match status" value="1"/>
</dbReference>
<dbReference type="PANTHER" id="PTHR44783:SF1">
    <property type="entry name" value="CXADR-LIKE MEMBRANE PROTEIN"/>
    <property type="match status" value="1"/>
</dbReference>
<dbReference type="Pfam" id="PF13927">
    <property type="entry name" value="Ig_3"/>
    <property type="match status" value="1"/>
</dbReference>
<dbReference type="Pfam" id="PF07686">
    <property type="entry name" value="V-set"/>
    <property type="match status" value="1"/>
</dbReference>
<dbReference type="SMART" id="SM00409">
    <property type="entry name" value="IG"/>
    <property type="match status" value="2"/>
</dbReference>
<dbReference type="SMART" id="SM00408">
    <property type="entry name" value="IGc2"/>
    <property type="match status" value="2"/>
</dbReference>
<dbReference type="SMART" id="SM00406">
    <property type="entry name" value="IGv"/>
    <property type="match status" value="2"/>
</dbReference>
<dbReference type="SUPFAM" id="SSF48726">
    <property type="entry name" value="Immunoglobulin"/>
    <property type="match status" value="2"/>
</dbReference>
<dbReference type="PROSITE" id="PS50835">
    <property type="entry name" value="IG_LIKE"/>
    <property type="match status" value="2"/>
</dbReference>
<proteinExistence type="evidence at transcript level"/>